<evidence type="ECO:0000255" key="1">
    <source>
        <dbReference type="HAMAP-Rule" id="MF_01621"/>
    </source>
</evidence>
<sequence>MLYQSETLQLHWLENGIAELVFDAPGSVNKLDTKTVANLGEALNVLEKQSELKGLLLRSAKTALIVGADITEFLSLFNAPPEKLHQWLVFANTIFNRLEDLPVPTISAINGYALGGGCECILATDFRIASPEARIGLPETKLGIMPGFGGSVRLPRLLGADSALEIIATGKDVTANDALKIGLVDAVVDPEKLVGSALTMLKQAIDGKLDWQAARRPKLEPLKLNPTEAAMCFTIAKGRVMQVAGKHYPAPLTAVKTIEAAAKFGRTEALNLETNSFVPLAGSNEARALVGIFLNDQYVKAQAKKLSKGVAAPKLAAVLGAGIMGGGIAYQSALKSVPVIMKDINENSLDLGMNEAAKLLNKQLERGKVDGLKMASILATIRPTLDYAGIERAQVIVEAVVENPKVKAAVLAEVEALIGEDTVLASNTSTIPIDQLAKSLKRPENFCGMHFFNPVHRMPLVEIIRGAKTSDKTLAAVVAYATQMGKTPIVVNDCPGFFVNRVLFPYLAGFGMLVRDGGDFHQIDKVMEKQFGWPMGPAYLLDVVGIDTAHHAQAVMAAGFPERMNKDYRDAVDVMFDNQRFGQKNGQGFYRYTQDAKGKPRKENDEQVDKLLAEISQPLQEFSDEDIIARTMIPMINEVVRCLEEGIIASAAEGDMALVYGLGFPPFHGGVFRYLDTLGSANYVEMAQRYAHLGALYHVPAGLRAKAEHNESYYPVAAALLDVSTNQPA</sequence>
<dbReference type="EC" id="4.2.1.17" evidence="1"/>
<dbReference type="EC" id="5.1.2.3" evidence="1"/>
<dbReference type="EC" id="5.3.3.8" evidence="1"/>
<dbReference type="EC" id="1.1.1.35" evidence="1"/>
<dbReference type="EMBL" id="CP000308">
    <property type="protein sequence ID" value="ABG15398.1"/>
    <property type="molecule type" value="Genomic_DNA"/>
</dbReference>
<dbReference type="RefSeq" id="WP_002211546.1">
    <property type="nucleotide sequence ID" value="NZ_CP009906.1"/>
</dbReference>
<dbReference type="SMR" id="Q1C2C4"/>
<dbReference type="GeneID" id="57974942"/>
<dbReference type="KEGG" id="ypa:YPA_3436"/>
<dbReference type="UniPathway" id="UPA00659"/>
<dbReference type="Proteomes" id="UP000001971">
    <property type="component" value="Chromosome"/>
</dbReference>
<dbReference type="GO" id="GO:0036125">
    <property type="term" value="C:fatty acid beta-oxidation multienzyme complex"/>
    <property type="evidence" value="ECO:0007669"/>
    <property type="project" value="InterPro"/>
</dbReference>
<dbReference type="GO" id="GO:0008692">
    <property type="term" value="F:3-hydroxybutyryl-CoA epimerase activity"/>
    <property type="evidence" value="ECO:0007669"/>
    <property type="project" value="UniProtKB-UniRule"/>
</dbReference>
<dbReference type="GO" id="GO:0004165">
    <property type="term" value="F:delta(3)-delta(2)-enoyl-CoA isomerase activity"/>
    <property type="evidence" value="ECO:0007669"/>
    <property type="project" value="UniProtKB-UniRule"/>
</dbReference>
<dbReference type="GO" id="GO:0004300">
    <property type="term" value="F:enoyl-CoA hydratase activity"/>
    <property type="evidence" value="ECO:0007669"/>
    <property type="project" value="UniProtKB-UniRule"/>
</dbReference>
<dbReference type="GO" id="GO:0016509">
    <property type="term" value="F:long-chain-3-hydroxyacyl-CoA dehydrogenase activity"/>
    <property type="evidence" value="ECO:0007669"/>
    <property type="project" value="TreeGrafter"/>
</dbReference>
<dbReference type="GO" id="GO:0070403">
    <property type="term" value="F:NAD+ binding"/>
    <property type="evidence" value="ECO:0007669"/>
    <property type="project" value="InterPro"/>
</dbReference>
<dbReference type="GO" id="GO:0006635">
    <property type="term" value="P:fatty acid beta-oxidation"/>
    <property type="evidence" value="ECO:0007669"/>
    <property type="project" value="UniProtKB-UniRule"/>
</dbReference>
<dbReference type="CDD" id="cd06558">
    <property type="entry name" value="crotonase-like"/>
    <property type="match status" value="1"/>
</dbReference>
<dbReference type="FunFam" id="1.10.1040.50:FF:000001">
    <property type="entry name" value="Fatty acid oxidation complex subunit alpha"/>
    <property type="match status" value="1"/>
</dbReference>
<dbReference type="FunFam" id="3.90.226.10:FF:000018">
    <property type="entry name" value="Fatty acid oxidation complex subunit alpha"/>
    <property type="match status" value="1"/>
</dbReference>
<dbReference type="FunFam" id="3.40.50.720:FF:000009">
    <property type="entry name" value="Fatty oxidation complex, alpha subunit"/>
    <property type="match status" value="1"/>
</dbReference>
<dbReference type="Gene3D" id="1.10.1040.50">
    <property type="match status" value="1"/>
</dbReference>
<dbReference type="Gene3D" id="3.90.226.10">
    <property type="entry name" value="2-enoyl-CoA Hydratase, Chain A, domain 1"/>
    <property type="match status" value="1"/>
</dbReference>
<dbReference type="Gene3D" id="3.40.50.720">
    <property type="entry name" value="NAD(P)-binding Rossmann-like Domain"/>
    <property type="match status" value="1"/>
</dbReference>
<dbReference type="HAMAP" id="MF_01621">
    <property type="entry name" value="FadB"/>
    <property type="match status" value="1"/>
</dbReference>
<dbReference type="InterPro" id="IPR006180">
    <property type="entry name" value="3-OHacyl-CoA_DH_CS"/>
</dbReference>
<dbReference type="InterPro" id="IPR006176">
    <property type="entry name" value="3-OHacyl-CoA_DH_NAD-bd"/>
</dbReference>
<dbReference type="InterPro" id="IPR006108">
    <property type="entry name" value="3HC_DH_C"/>
</dbReference>
<dbReference type="InterPro" id="IPR008927">
    <property type="entry name" value="6-PGluconate_DH-like_C_sf"/>
</dbReference>
<dbReference type="InterPro" id="IPR029045">
    <property type="entry name" value="ClpP/crotonase-like_dom_sf"/>
</dbReference>
<dbReference type="InterPro" id="IPR018376">
    <property type="entry name" value="Enoyl-CoA_hyd/isom_CS"/>
</dbReference>
<dbReference type="InterPro" id="IPR001753">
    <property type="entry name" value="Enoyl-CoA_hydra/iso"/>
</dbReference>
<dbReference type="InterPro" id="IPR050136">
    <property type="entry name" value="FA_oxidation_alpha_subunit"/>
</dbReference>
<dbReference type="InterPro" id="IPR012799">
    <property type="entry name" value="FadB"/>
</dbReference>
<dbReference type="InterPro" id="IPR036291">
    <property type="entry name" value="NAD(P)-bd_dom_sf"/>
</dbReference>
<dbReference type="NCBIfam" id="TIGR02437">
    <property type="entry name" value="FadB"/>
    <property type="match status" value="1"/>
</dbReference>
<dbReference type="NCBIfam" id="NF008727">
    <property type="entry name" value="PRK11730.1"/>
    <property type="match status" value="1"/>
</dbReference>
<dbReference type="PANTHER" id="PTHR43612">
    <property type="entry name" value="TRIFUNCTIONAL ENZYME SUBUNIT ALPHA"/>
    <property type="match status" value="1"/>
</dbReference>
<dbReference type="PANTHER" id="PTHR43612:SF3">
    <property type="entry name" value="TRIFUNCTIONAL ENZYME SUBUNIT ALPHA, MITOCHONDRIAL"/>
    <property type="match status" value="1"/>
</dbReference>
<dbReference type="Pfam" id="PF00725">
    <property type="entry name" value="3HCDH"/>
    <property type="match status" value="1"/>
</dbReference>
<dbReference type="Pfam" id="PF02737">
    <property type="entry name" value="3HCDH_N"/>
    <property type="match status" value="1"/>
</dbReference>
<dbReference type="Pfam" id="PF00378">
    <property type="entry name" value="ECH_1"/>
    <property type="match status" value="1"/>
</dbReference>
<dbReference type="SUPFAM" id="SSF48179">
    <property type="entry name" value="6-phosphogluconate dehydrogenase C-terminal domain-like"/>
    <property type="match status" value="2"/>
</dbReference>
<dbReference type="SUPFAM" id="SSF52096">
    <property type="entry name" value="ClpP/crotonase"/>
    <property type="match status" value="1"/>
</dbReference>
<dbReference type="SUPFAM" id="SSF51735">
    <property type="entry name" value="NAD(P)-binding Rossmann-fold domains"/>
    <property type="match status" value="1"/>
</dbReference>
<dbReference type="PROSITE" id="PS00067">
    <property type="entry name" value="3HCDH"/>
    <property type="match status" value="1"/>
</dbReference>
<dbReference type="PROSITE" id="PS00166">
    <property type="entry name" value="ENOYL_COA_HYDRATASE"/>
    <property type="match status" value="1"/>
</dbReference>
<protein>
    <recommendedName>
        <fullName evidence="1">Fatty acid oxidation complex subunit alpha</fullName>
    </recommendedName>
    <domain>
        <recommendedName>
            <fullName evidence="1">Enoyl-CoA hydratase/Delta(3)-cis-Delta(2)-trans-enoyl-CoA isomerase/3-hydroxybutyryl-CoA epimerase</fullName>
            <ecNumber evidence="1">4.2.1.17</ecNumber>
            <ecNumber evidence="1">5.1.2.3</ecNumber>
            <ecNumber evidence="1">5.3.3.8</ecNumber>
        </recommendedName>
    </domain>
    <domain>
        <recommendedName>
            <fullName evidence="1">3-hydroxyacyl-CoA dehydrogenase</fullName>
            <ecNumber evidence="1">1.1.1.35</ecNumber>
        </recommendedName>
    </domain>
</protein>
<organism>
    <name type="scientific">Yersinia pestis bv. Antiqua (strain Antiqua)</name>
    <dbReference type="NCBI Taxonomy" id="360102"/>
    <lineage>
        <taxon>Bacteria</taxon>
        <taxon>Pseudomonadati</taxon>
        <taxon>Pseudomonadota</taxon>
        <taxon>Gammaproteobacteria</taxon>
        <taxon>Enterobacterales</taxon>
        <taxon>Yersiniaceae</taxon>
        <taxon>Yersinia</taxon>
    </lineage>
</organism>
<proteinExistence type="inferred from homology"/>
<reference key="1">
    <citation type="journal article" date="2006" name="J. Bacteriol.">
        <title>Complete genome sequence of Yersinia pestis strains Antiqua and Nepal516: evidence of gene reduction in an emerging pathogen.</title>
        <authorList>
            <person name="Chain P.S.G."/>
            <person name="Hu P."/>
            <person name="Malfatti S.A."/>
            <person name="Radnedge L."/>
            <person name="Larimer F."/>
            <person name="Vergez L.M."/>
            <person name="Worsham P."/>
            <person name="Chu M.C."/>
            <person name="Andersen G.L."/>
        </authorList>
    </citation>
    <scope>NUCLEOTIDE SEQUENCE [LARGE SCALE GENOMIC DNA]</scope>
    <source>
        <strain>Antiqua</strain>
    </source>
</reference>
<comment type="function">
    <text evidence="1">Involved in the aerobic and anaerobic degradation of long-chain fatty acids via beta-oxidation cycle. Catalyzes the formation of 3-oxoacyl-CoA from enoyl-CoA via L-3-hydroxyacyl-CoA. It can also use D-3-hydroxyacyl-CoA and cis-3-enoyl-CoA as substrate.</text>
</comment>
<comment type="catalytic activity">
    <reaction evidence="1">
        <text>a (3S)-3-hydroxyacyl-CoA + NAD(+) = a 3-oxoacyl-CoA + NADH + H(+)</text>
        <dbReference type="Rhea" id="RHEA:22432"/>
        <dbReference type="ChEBI" id="CHEBI:15378"/>
        <dbReference type="ChEBI" id="CHEBI:57318"/>
        <dbReference type="ChEBI" id="CHEBI:57540"/>
        <dbReference type="ChEBI" id="CHEBI:57945"/>
        <dbReference type="ChEBI" id="CHEBI:90726"/>
        <dbReference type="EC" id="1.1.1.35"/>
    </reaction>
</comment>
<comment type="catalytic activity">
    <reaction evidence="1">
        <text>a (3S)-3-hydroxyacyl-CoA = a (2E)-enoyl-CoA + H2O</text>
        <dbReference type="Rhea" id="RHEA:16105"/>
        <dbReference type="ChEBI" id="CHEBI:15377"/>
        <dbReference type="ChEBI" id="CHEBI:57318"/>
        <dbReference type="ChEBI" id="CHEBI:58856"/>
        <dbReference type="EC" id="4.2.1.17"/>
    </reaction>
</comment>
<comment type="catalytic activity">
    <reaction evidence="1">
        <text>a 4-saturated-(3S)-3-hydroxyacyl-CoA = a (3E)-enoyl-CoA + H2O</text>
        <dbReference type="Rhea" id="RHEA:20724"/>
        <dbReference type="ChEBI" id="CHEBI:15377"/>
        <dbReference type="ChEBI" id="CHEBI:58521"/>
        <dbReference type="ChEBI" id="CHEBI:137480"/>
        <dbReference type="EC" id="4.2.1.17"/>
    </reaction>
</comment>
<comment type="catalytic activity">
    <reaction evidence="1">
        <text>(3S)-3-hydroxybutanoyl-CoA = (3R)-3-hydroxybutanoyl-CoA</text>
        <dbReference type="Rhea" id="RHEA:21760"/>
        <dbReference type="ChEBI" id="CHEBI:57315"/>
        <dbReference type="ChEBI" id="CHEBI:57316"/>
        <dbReference type="EC" id="5.1.2.3"/>
    </reaction>
</comment>
<comment type="catalytic activity">
    <reaction evidence="1">
        <text>a (3Z)-enoyl-CoA = a 4-saturated (2E)-enoyl-CoA</text>
        <dbReference type="Rhea" id="RHEA:45900"/>
        <dbReference type="ChEBI" id="CHEBI:85097"/>
        <dbReference type="ChEBI" id="CHEBI:85489"/>
        <dbReference type="EC" id="5.3.3.8"/>
    </reaction>
</comment>
<comment type="catalytic activity">
    <reaction evidence="1">
        <text>a (3E)-enoyl-CoA = a 4-saturated (2E)-enoyl-CoA</text>
        <dbReference type="Rhea" id="RHEA:45228"/>
        <dbReference type="ChEBI" id="CHEBI:58521"/>
        <dbReference type="ChEBI" id="CHEBI:85097"/>
        <dbReference type="EC" id="5.3.3.8"/>
    </reaction>
</comment>
<comment type="pathway">
    <text evidence="1">Lipid metabolism; fatty acid beta-oxidation.</text>
</comment>
<comment type="subunit">
    <text evidence="1">Heterotetramer of two alpha chains (FadB) and two beta chains (FadA).</text>
</comment>
<comment type="similarity">
    <text evidence="1">In the N-terminal section; belongs to the enoyl-CoA hydratase/isomerase family.</text>
</comment>
<comment type="similarity">
    <text evidence="1">In the C-terminal section; belongs to the 3-hydroxyacyl-CoA dehydrogenase family.</text>
</comment>
<accession>Q1C2C4</accession>
<feature type="chain" id="PRO_0000255847" description="Fatty acid oxidation complex subunit alpha">
    <location>
        <begin position="1"/>
        <end position="729"/>
    </location>
</feature>
<feature type="region of interest" description="Enoyl-CoA hydratase/isomerase" evidence="1">
    <location>
        <begin position="1"/>
        <end position="189"/>
    </location>
</feature>
<feature type="region of interest" description="3-hydroxyacyl-CoA dehydrogenase" evidence="1">
    <location>
        <begin position="311"/>
        <end position="729"/>
    </location>
</feature>
<feature type="active site" description="For 3-hydroxyacyl-CoA dehydrogenase activity" evidence="1">
    <location>
        <position position="450"/>
    </location>
</feature>
<feature type="binding site" evidence="1">
    <location>
        <position position="296"/>
    </location>
    <ligand>
        <name>substrate</name>
    </ligand>
</feature>
<feature type="binding site" evidence="1">
    <location>
        <position position="324"/>
    </location>
    <ligand>
        <name>NAD(+)</name>
        <dbReference type="ChEBI" id="CHEBI:57540"/>
    </ligand>
</feature>
<feature type="binding site" evidence="1">
    <location>
        <position position="343"/>
    </location>
    <ligand>
        <name>NAD(+)</name>
        <dbReference type="ChEBI" id="CHEBI:57540"/>
    </ligand>
</feature>
<feature type="binding site" evidence="1">
    <location>
        <begin position="400"/>
        <end position="402"/>
    </location>
    <ligand>
        <name>NAD(+)</name>
        <dbReference type="ChEBI" id="CHEBI:57540"/>
    </ligand>
</feature>
<feature type="binding site" evidence="1">
    <location>
        <position position="407"/>
    </location>
    <ligand>
        <name>NAD(+)</name>
        <dbReference type="ChEBI" id="CHEBI:57540"/>
    </ligand>
</feature>
<feature type="binding site" evidence="1">
    <location>
        <position position="429"/>
    </location>
    <ligand>
        <name>NAD(+)</name>
        <dbReference type="ChEBI" id="CHEBI:57540"/>
    </ligand>
</feature>
<feature type="binding site" evidence="1">
    <location>
        <position position="453"/>
    </location>
    <ligand>
        <name>NAD(+)</name>
        <dbReference type="ChEBI" id="CHEBI:57540"/>
    </ligand>
</feature>
<feature type="binding site" evidence="1">
    <location>
        <position position="500"/>
    </location>
    <ligand>
        <name>substrate</name>
    </ligand>
</feature>
<feature type="binding site" evidence="1">
    <location>
        <position position="660"/>
    </location>
    <ligand>
        <name>substrate</name>
    </ligand>
</feature>
<feature type="site" description="Important for catalytic activity" evidence="1">
    <location>
        <position position="119"/>
    </location>
</feature>
<feature type="site" description="Important for catalytic activity" evidence="1">
    <location>
        <position position="139"/>
    </location>
</feature>
<name>FADB_YERPA</name>
<keyword id="KW-0276">Fatty acid metabolism</keyword>
<keyword id="KW-0413">Isomerase</keyword>
<keyword id="KW-0442">Lipid degradation</keyword>
<keyword id="KW-0443">Lipid metabolism</keyword>
<keyword id="KW-0456">Lyase</keyword>
<keyword id="KW-0511">Multifunctional enzyme</keyword>
<keyword id="KW-0520">NAD</keyword>
<keyword id="KW-0560">Oxidoreductase</keyword>
<gene>
    <name evidence="1" type="primary">fadB</name>
    <name type="ordered locus">YPA_3436</name>
</gene>